<proteinExistence type="inferred from homology"/>
<accession>Q038J7</accession>
<keyword id="KW-1185">Reference proteome</keyword>
<keyword id="KW-0687">Ribonucleoprotein</keyword>
<keyword id="KW-0689">Ribosomal protein</keyword>
<dbReference type="EMBL" id="CP000423">
    <property type="protein sequence ID" value="ABJ70375.1"/>
    <property type="molecule type" value="Genomic_DNA"/>
</dbReference>
<dbReference type="RefSeq" id="WP_003564756.1">
    <property type="nucleotide sequence ID" value="NC_008526.1"/>
</dbReference>
<dbReference type="RefSeq" id="YP_806817.1">
    <property type="nucleotide sequence ID" value="NC_008526.1"/>
</dbReference>
<dbReference type="SMR" id="Q038J7"/>
<dbReference type="STRING" id="321967.LSEI_1601"/>
<dbReference type="PaxDb" id="321967-LSEI_1601"/>
<dbReference type="GeneID" id="93269226"/>
<dbReference type="KEGG" id="lca:LSEI_1601"/>
<dbReference type="PATRIC" id="fig|321967.11.peg.1582"/>
<dbReference type="HOGENOM" id="CLU_100590_5_0_9"/>
<dbReference type="PRO" id="PR:Q038J7"/>
<dbReference type="Proteomes" id="UP000001651">
    <property type="component" value="Chromosome"/>
</dbReference>
<dbReference type="GO" id="GO:0005737">
    <property type="term" value="C:cytoplasm"/>
    <property type="evidence" value="ECO:0007669"/>
    <property type="project" value="UniProtKB-ARBA"/>
</dbReference>
<dbReference type="GO" id="GO:0015935">
    <property type="term" value="C:small ribosomal subunit"/>
    <property type="evidence" value="ECO:0007669"/>
    <property type="project" value="TreeGrafter"/>
</dbReference>
<dbReference type="GO" id="GO:0003735">
    <property type="term" value="F:structural constituent of ribosome"/>
    <property type="evidence" value="ECO:0007669"/>
    <property type="project" value="InterPro"/>
</dbReference>
<dbReference type="GO" id="GO:0006412">
    <property type="term" value="P:translation"/>
    <property type="evidence" value="ECO:0007669"/>
    <property type="project" value="UniProtKB-UniRule"/>
</dbReference>
<dbReference type="FunFam" id="3.30.1320.10:FF:000002">
    <property type="entry name" value="30S ribosomal protein S16"/>
    <property type="match status" value="1"/>
</dbReference>
<dbReference type="Gene3D" id="3.30.1320.10">
    <property type="match status" value="1"/>
</dbReference>
<dbReference type="HAMAP" id="MF_00385">
    <property type="entry name" value="Ribosomal_bS16"/>
    <property type="match status" value="1"/>
</dbReference>
<dbReference type="InterPro" id="IPR000307">
    <property type="entry name" value="Ribosomal_bS16"/>
</dbReference>
<dbReference type="InterPro" id="IPR023803">
    <property type="entry name" value="Ribosomal_bS16_dom_sf"/>
</dbReference>
<dbReference type="NCBIfam" id="TIGR00002">
    <property type="entry name" value="S16"/>
    <property type="match status" value="1"/>
</dbReference>
<dbReference type="PANTHER" id="PTHR12919">
    <property type="entry name" value="30S RIBOSOMAL PROTEIN S16"/>
    <property type="match status" value="1"/>
</dbReference>
<dbReference type="PANTHER" id="PTHR12919:SF20">
    <property type="entry name" value="SMALL RIBOSOMAL SUBUNIT PROTEIN BS16M"/>
    <property type="match status" value="1"/>
</dbReference>
<dbReference type="Pfam" id="PF00886">
    <property type="entry name" value="Ribosomal_S16"/>
    <property type="match status" value="1"/>
</dbReference>
<dbReference type="SUPFAM" id="SSF54565">
    <property type="entry name" value="Ribosomal protein S16"/>
    <property type="match status" value="1"/>
</dbReference>
<sequence length="91" mass="10521">MAVKIRLKRMGSKRKPFYRIVVADSRSPRDGRFIEAVGYYNPLTNPVDLKLNEEDILNWLQKGAQPSDTVRNLLGSKGIMQKYHEARFAKK</sequence>
<reference key="1">
    <citation type="journal article" date="2006" name="Proc. Natl. Acad. Sci. U.S.A.">
        <title>Comparative genomics of the lactic acid bacteria.</title>
        <authorList>
            <person name="Makarova K.S."/>
            <person name="Slesarev A."/>
            <person name="Wolf Y.I."/>
            <person name="Sorokin A."/>
            <person name="Mirkin B."/>
            <person name="Koonin E.V."/>
            <person name="Pavlov A."/>
            <person name="Pavlova N."/>
            <person name="Karamychev V."/>
            <person name="Polouchine N."/>
            <person name="Shakhova V."/>
            <person name="Grigoriev I."/>
            <person name="Lou Y."/>
            <person name="Rohksar D."/>
            <person name="Lucas S."/>
            <person name="Huang K."/>
            <person name="Goodstein D.M."/>
            <person name="Hawkins T."/>
            <person name="Plengvidhya V."/>
            <person name="Welker D."/>
            <person name="Hughes J."/>
            <person name="Goh Y."/>
            <person name="Benson A."/>
            <person name="Baldwin K."/>
            <person name="Lee J.-H."/>
            <person name="Diaz-Muniz I."/>
            <person name="Dosti B."/>
            <person name="Smeianov V."/>
            <person name="Wechter W."/>
            <person name="Barabote R."/>
            <person name="Lorca G."/>
            <person name="Altermann E."/>
            <person name="Barrangou R."/>
            <person name="Ganesan B."/>
            <person name="Xie Y."/>
            <person name="Rawsthorne H."/>
            <person name="Tamir D."/>
            <person name="Parker C."/>
            <person name="Breidt F."/>
            <person name="Broadbent J.R."/>
            <person name="Hutkins R."/>
            <person name="O'Sullivan D."/>
            <person name="Steele J."/>
            <person name="Unlu G."/>
            <person name="Saier M.H. Jr."/>
            <person name="Klaenhammer T."/>
            <person name="Richardson P."/>
            <person name="Kozyavkin S."/>
            <person name="Weimer B.C."/>
            <person name="Mills D.A."/>
        </authorList>
    </citation>
    <scope>NUCLEOTIDE SEQUENCE [LARGE SCALE GENOMIC DNA]</scope>
    <source>
        <strain>ATCC 334 / BCRC 17002 / CCUG 31169 / CIP 107868 / KCTC 3260 / NRRL B-441</strain>
    </source>
</reference>
<evidence type="ECO:0000255" key="1">
    <source>
        <dbReference type="HAMAP-Rule" id="MF_00385"/>
    </source>
</evidence>
<evidence type="ECO:0000305" key="2"/>
<feature type="chain" id="PRO_1000049273" description="Small ribosomal subunit protein bS16">
    <location>
        <begin position="1"/>
        <end position="91"/>
    </location>
</feature>
<name>RS16_LACP3</name>
<protein>
    <recommendedName>
        <fullName evidence="1">Small ribosomal subunit protein bS16</fullName>
    </recommendedName>
    <alternativeName>
        <fullName evidence="2">30S ribosomal protein S16</fullName>
    </alternativeName>
</protein>
<comment type="similarity">
    <text evidence="1">Belongs to the bacterial ribosomal protein bS16 family.</text>
</comment>
<organism>
    <name type="scientific">Lacticaseibacillus paracasei (strain ATCC 334 / BCRC 17002 / CCUG 31169 / CIP 107868 / KCTC 3260 / NRRL B-441)</name>
    <name type="common">Lactobacillus paracasei</name>
    <dbReference type="NCBI Taxonomy" id="321967"/>
    <lineage>
        <taxon>Bacteria</taxon>
        <taxon>Bacillati</taxon>
        <taxon>Bacillota</taxon>
        <taxon>Bacilli</taxon>
        <taxon>Lactobacillales</taxon>
        <taxon>Lactobacillaceae</taxon>
        <taxon>Lacticaseibacillus</taxon>
    </lineage>
</organism>
<gene>
    <name evidence="1" type="primary">rpsP</name>
    <name type="ordered locus">LSEI_1601</name>
</gene>